<sequence length="178" mass="20060">MPNKDDDNLDMGDSNVSRKGGLLPDIIIKILQILAIGIFTVAIMIIVSYFVSKMVVSQSGAPSDFPVFSNEYLGKPPMLIWYESIDEIRGNTLDVPPKTFVVKLALGYAENNVNILNELGRQKVRLKDIIREYFSQRTGQEIKNESQIKAEIKARINSILRNGEIKEIALTQIDIFDM</sequence>
<organism>
    <name type="scientific">Borreliella burgdorferi (strain ATCC 35210 / DSM 4680 / CIP 102532 / B31)</name>
    <name type="common">Borrelia burgdorferi</name>
    <dbReference type="NCBI Taxonomy" id="224326"/>
    <lineage>
        <taxon>Bacteria</taxon>
        <taxon>Pseudomonadati</taxon>
        <taxon>Spirochaetota</taxon>
        <taxon>Spirochaetia</taxon>
        <taxon>Spirochaetales</taxon>
        <taxon>Borreliaceae</taxon>
        <taxon>Borreliella</taxon>
    </lineage>
</organism>
<name>FLIL_BORBU</name>
<comment type="function">
    <text evidence="1">Controls the rotational direction of flagella during chemotaxis.</text>
</comment>
<comment type="subcellular location">
    <subcellularLocation>
        <location evidence="3">Cell membrane</location>
        <topology evidence="3">Single-pass membrane protein</topology>
    </subcellularLocation>
</comment>
<comment type="similarity">
    <text evidence="3">Belongs to the FliL family.</text>
</comment>
<evidence type="ECO:0000250" key="1"/>
<evidence type="ECO:0000255" key="2"/>
<evidence type="ECO:0000305" key="3"/>
<dbReference type="EMBL" id="U43739">
    <property type="protein sequence ID" value="AAA85603.1"/>
    <property type="molecule type" value="Genomic_DNA"/>
</dbReference>
<dbReference type="EMBL" id="L75945">
    <property type="protein sequence ID" value="AAB58964.1"/>
    <property type="molecule type" value="Genomic_DNA"/>
</dbReference>
<dbReference type="EMBL" id="AE000783">
    <property type="protein sequence ID" value="AAC66669.1"/>
    <property type="molecule type" value="Genomic_DNA"/>
</dbReference>
<dbReference type="PIR" id="G70134">
    <property type="entry name" value="G70134"/>
</dbReference>
<dbReference type="RefSeq" id="NP_212413.1">
    <property type="nucleotide sequence ID" value="NC_001318.1"/>
</dbReference>
<dbReference type="RefSeq" id="WP_002656257.1">
    <property type="nucleotide sequence ID" value="NC_001318.1"/>
</dbReference>
<dbReference type="SMR" id="Q57442"/>
<dbReference type="STRING" id="224326.BB_0279"/>
<dbReference type="PaxDb" id="224326-BB_0279"/>
<dbReference type="EnsemblBacteria" id="AAC66669">
    <property type="protein sequence ID" value="AAC66669"/>
    <property type="gene ID" value="BB_0279"/>
</dbReference>
<dbReference type="GeneID" id="56567710"/>
<dbReference type="KEGG" id="bbu:BB_0279"/>
<dbReference type="PATRIC" id="fig|224326.49.peg.678"/>
<dbReference type="HOGENOM" id="CLU_126053_0_0_12"/>
<dbReference type="OrthoDB" id="350725at2"/>
<dbReference type="Proteomes" id="UP000001807">
    <property type="component" value="Chromosome"/>
</dbReference>
<dbReference type="GO" id="GO:0009425">
    <property type="term" value="C:bacterial-type flagellum basal body"/>
    <property type="evidence" value="ECO:0007669"/>
    <property type="project" value="InterPro"/>
</dbReference>
<dbReference type="GO" id="GO:0005886">
    <property type="term" value="C:plasma membrane"/>
    <property type="evidence" value="ECO:0007669"/>
    <property type="project" value="UniProtKB-SubCell"/>
</dbReference>
<dbReference type="GO" id="GO:0071973">
    <property type="term" value="P:bacterial-type flagellum-dependent cell motility"/>
    <property type="evidence" value="ECO:0007669"/>
    <property type="project" value="InterPro"/>
</dbReference>
<dbReference type="GO" id="GO:0006935">
    <property type="term" value="P:chemotaxis"/>
    <property type="evidence" value="ECO:0007669"/>
    <property type="project" value="UniProtKB-KW"/>
</dbReference>
<dbReference type="InterPro" id="IPR005503">
    <property type="entry name" value="FliL"/>
</dbReference>
<dbReference type="NCBIfam" id="NF005175">
    <property type="entry name" value="PRK06654.1"/>
    <property type="match status" value="1"/>
</dbReference>
<dbReference type="Pfam" id="PF03748">
    <property type="entry name" value="FliL"/>
    <property type="match status" value="1"/>
</dbReference>
<keyword id="KW-1003">Cell membrane</keyword>
<keyword id="KW-0145">Chemotaxis</keyword>
<keyword id="KW-0283">Flagellar rotation</keyword>
<keyword id="KW-0472">Membrane</keyword>
<keyword id="KW-1185">Reference proteome</keyword>
<keyword id="KW-0812">Transmembrane</keyword>
<keyword id="KW-1133">Transmembrane helix</keyword>
<gene>
    <name type="primary">fliL</name>
    <name type="ordered locus">BB_0279</name>
</gene>
<feature type="chain" id="PRO_0000180912" description="Flagellar protein FliL">
    <location>
        <begin position="1"/>
        <end position="178"/>
    </location>
</feature>
<feature type="transmembrane region" description="Helical" evidence="2">
    <location>
        <begin position="26"/>
        <end position="46"/>
    </location>
</feature>
<proteinExistence type="inferred from homology"/>
<reference key="1">
    <citation type="submission" date="1995-12" db="EMBL/GenBank/DDBJ databases">
        <authorList>
            <person name="Dunn J.J."/>
            <person name="Butler-Loffredo L."/>
            <person name="Kieleczawa J."/>
            <person name="Medalle J."/>
            <person name="Luft B.J."/>
        </authorList>
    </citation>
    <scope>NUCLEOTIDE SEQUENCE [GENOMIC DNA]</scope>
    <source>
        <strain>ATCC 35210 / DSM 4680 / CIP 102532 / B31</strain>
    </source>
</reference>
<reference key="2">
    <citation type="submission" date="1996-02" db="EMBL/GenBank/DDBJ databases">
        <authorList>
            <person name="Ge Y."/>
            <person name="Charon N.W."/>
        </authorList>
    </citation>
    <scope>NUCLEOTIDE SEQUENCE [GENOMIC DNA]</scope>
    <source>
        <strain>B212</strain>
    </source>
</reference>
<reference key="3">
    <citation type="journal article" date="1997" name="Nature">
        <title>Genomic sequence of a Lyme disease spirochaete, Borrelia burgdorferi.</title>
        <authorList>
            <person name="Fraser C.M."/>
            <person name="Casjens S."/>
            <person name="Huang W.M."/>
            <person name="Sutton G.G."/>
            <person name="Clayton R.A."/>
            <person name="Lathigra R."/>
            <person name="White O."/>
            <person name="Ketchum K.A."/>
            <person name="Dodson R.J."/>
            <person name="Hickey E.K."/>
            <person name="Gwinn M.L."/>
            <person name="Dougherty B.A."/>
            <person name="Tomb J.-F."/>
            <person name="Fleischmann R.D."/>
            <person name="Richardson D.L."/>
            <person name="Peterson J.D."/>
            <person name="Kerlavage A.R."/>
            <person name="Quackenbush J."/>
            <person name="Salzberg S.L."/>
            <person name="Hanson M."/>
            <person name="van Vugt R."/>
            <person name="Palmer N."/>
            <person name="Adams M.D."/>
            <person name="Gocayne J.D."/>
            <person name="Weidman J.F."/>
            <person name="Utterback T.R."/>
            <person name="Watthey L."/>
            <person name="McDonald L.A."/>
            <person name="Artiach P."/>
            <person name="Bowman C."/>
            <person name="Garland S.A."/>
            <person name="Fujii C."/>
            <person name="Cotton M.D."/>
            <person name="Horst K."/>
            <person name="Roberts K.M."/>
            <person name="Hatch B."/>
            <person name="Smith H.O."/>
            <person name="Venter J.C."/>
        </authorList>
    </citation>
    <scope>NUCLEOTIDE SEQUENCE [LARGE SCALE GENOMIC DNA]</scope>
    <source>
        <strain>ATCC 35210 / DSM 4680 / CIP 102532 / B31</strain>
    </source>
</reference>
<accession>Q57442</accession>
<protein>
    <recommendedName>
        <fullName>Flagellar protein FliL</fullName>
    </recommendedName>
</protein>